<keyword id="KW-0007">Acetylation</keyword>
<keyword id="KW-0217">Developmental protein</keyword>
<keyword id="KW-0221">Differentiation</keyword>
<keyword id="KW-0238">DNA-binding</keyword>
<keyword id="KW-0524">Neurogenesis</keyword>
<keyword id="KW-0539">Nucleus</keyword>
<keyword id="KW-1185">Reference proteome</keyword>
<keyword id="KW-0678">Repressor</keyword>
<keyword id="KW-0804">Transcription</keyword>
<keyword id="KW-0805">Transcription regulation</keyword>
<proteinExistence type="evidence at protein level"/>
<sequence length="240" mass="26973">MSDRLKERKRTPVSHKVIEKRRRDRINRCLNELGKTVPMALAKQSSGKLEKAEILEMTVQYLRALHSADFPRGREKELLAEFANYFHYGYHECMKNLVHYLTTVERMETKDTKYARILAFLQSKARLGAEPTFPPLSLPEPDFSYQLHAASPEFPGHSPGEATMFPQGATPGSFPWPPGAARSPALPYLSSATVPLPSPAQQHSPFLAPMQGLDRHYLNLIGHGHPNGLNLHTPQHPPVL</sequence>
<reference key="1">
    <citation type="journal article" date="2004" name="J. Biol. Chem.">
        <title>Helt, a novel basic-helix-loop-helix transcriptional repressor expressed in the developing central nervous system.</title>
        <authorList>
            <person name="Nakatani T."/>
            <person name="Mizuhara E."/>
            <person name="Minaki Y."/>
            <person name="Sakamoto Y."/>
            <person name="Ono Y."/>
        </authorList>
    </citation>
    <scope>NUCLEOTIDE SEQUENCE [MRNA]</scope>
    <scope>FUNCTION</scope>
    <scope>SELF-ASSOCIATION</scope>
    <scope>INTERACTION WITH HES5 AND HEY2</scope>
    <scope>SUBCELLULAR LOCATION</scope>
    <scope>DNA-BINDING</scope>
    <source>
        <strain>BALB/cJ</strain>
        <tissue>Brain</tissue>
    </source>
</reference>
<reference key="2">
    <citation type="journal article" date="2004" name="J. Neurosci.">
        <title>Identification of a novel basic helix-loop-helix gene, Heslike, and its role in GABAergic neurogenesis.</title>
        <authorList>
            <person name="Miyoshi G."/>
            <person name="Bessho Y."/>
            <person name="Yamada S."/>
            <person name="Kageyama R."/>
        </authorList>
    </citation>
    <scope>NUCLEOTIDE SEQUENCE [MRNA]</scope>
    <scope>FUNCTION</scope>
    <scope>DEVELOPMENTAL STAGE</scope>
</reference>
<reference key="3">
    <citation type="journal article" date="2006" name="Gene">
        <title>Molecular characterization, structure and developmental expression of Megane bHLH factor.</title>
        <authorList>
            <person name="Guimera J."/>
            <person name="Vogt Weisenhorn D."/>
            <person name="Echevarria D."/>
            <person name="Martinez S."/>
            <person name="Wurst W."/>
        </authorList>
    </citation>
    <scope>NUCLEOTIDE SEQUENCE [MRNA]</scope>
    <scope>SUBCELLULAR LOCATION</scope>
    <scope>DEVELOPMENTAL STAGE</scope>
    <source>
        <strain>129/SvJ</strain>
        <tissue>Brain</tissue>
    </source>
</reference>
<reference key="4">
    <citation type="journal article" date="2004" name="Genome Res.">
        <title>The status, quality, and expansion of the NIH full-length cDNA project: the Mammalian Gene Collection (MGC).</title>
        <authorList>
            <consortium name="The MGC Project Team"/>
        </authorList>
    </citation>
    <scope>NUCLEOTIDE SEQUENCE [LARGE SCALE MRNA]</scope>
</reference>
<reference key="5">
    <citation type="journal article" date="2006" name="Development">
        <title>Megane/Heslike is required for normal GABAergic differentiation in the mouse superior colliculus.</title>
        <authorList>
            <person name="Guimera J."/>
            <person name="Weisenhorn D.V."/>
            <person name="Wurst W."/>
        </authorList>
    </citation>
    <scope>FUNCTION</scope>
    <scope>DEVELOPMENTAL STAGE</scope>
    <scope>DISRUPTION PHENOTYPE</scope>
</reference>
<reference key="6">
    <citation type="journal article" date="2007" name="Development">
        <title>Helt determines GABAergic over glutamatergic neuronal fate by repressing Ngn genes in the developing mesencephalon.</title>
        <authorList>
            <person name="Nakatani T."/>
            <person name="Minaki Y."/>
            <person name="Kumai M."/>
            <person name="Ono Y."/>
        </authorList>
    </citation>
    <scope>FUNCTION</scope>
    <scope>DEVELOPMENTAL STAGE</scope>
</reference>
<reference key="7">
    <citation type="journal article" date="2013" name="Proc. Natl. Acad. Sci. U.S.A.">
        <title>Label-free quantitative proteomics of the lysine acetylome in mitochondria identifies substrates of SIRT3 in metabolic pathways.</title>
        <authorList>
            <person name="Rardin M.J."/>
            <person name="Newman J.C."/>
            <person name="Held J.M."/>
            <person name="Cusack M.P."/>
            <person name="Sorensen D.J."/>
            <person name="Li B."/>
            <person name="Schilling B."/>
            <person name="Mooney S.D."/>
            <person name="Kahn C.R."/>
            <person name="Verdin E."/>
            <person name="Gibson B.W."/>
        </authorList>
    </citation>
    <scope>ACETYLATION [LARGE SCALE ANALYSIS] AT LYS-48</scope>
    <scope>IDENTIFICATION BY MASS SPECTROMETRY [LARGE SCALE ANALYSIS]</scope>
    <source>
        <tissue>Liver</tissue>
    </source>
</reference>
<evidence type="ECO:0000255" key="1">
    <source>
        <dbReference type="PROSITE-ProRule" id="PRU00380"/>
    </source>
</evidence>
<evidence type="ECO:0000255" key="2">
    <source>
        <dbReference type="PROSITE-ProRule" id="PRU00981"/>
    </source>
</evidence>
<evidence type="ECO:0000269" key="3">
    <source>
    </source>
</evidence>
<evidence type="ECO:0000269" key="4">
    <source>
    </source>
</evidence>
<evidence type="ECO:0000269" key="5">
    <source>
    </source>
</evidence>
<evidence type="ECO:0000269" key="6">
    <source>
    </source>
</evidence>
<evidence type="ECO:0000269" key="7">
    <source>
    </source>
</evidence>
<evidence type="ECO:0000305" key="8"/>
<evidence type="ECO:0007744" key="9">
    <source>
    </source>
</evidence>
<dbReference type="EMBL" id="AB120968">
    <property type="protein sequence ID" value="BAD11127.1"/>
    <property type="molecule type" value="mRNA"/>
</dbReference>
<dbReference type="EMBL" id="AB098077">
    <property type="protein sequence ID" value="BAC77659.1"/>
    <property type="molecule type" value="mRNA"/>
</dbReference>
<dbReference type="EMBL" id="DQ294234">
    <property type="protein sequence ID" value="ABB96784.1"/>
    <property type="molecule type" value="mRNA"/>
</dbReference>
<dbReference type="EMBL" id="BC103599">
    <property type="protein sequence ID" value="AAI03600.1"/>
    <property type="molecule type" value="mRNA"/>
</dbReference>
<dbReference type="EMBL" id="BC103600">
    <property type="protein sequence ID" value="AAI03601.1"/>
    <property type="molecule type" value="mRNA"/>
</dbReference>
<dbReference type="EMBL" id="BC103601">
    <property type="protein sequence ID" value="AAI03602.1"/>
    <property type="molecule type" value="mRNA"/>
</dbReference>
<dbReference type="CCDS" id="CCDS22290.1"/>
<dbReference type="RefSeq" id="NP_776150.2">
    <property type="nucleotide sequence ID" value="NM_173789.4"/>
</dbReference>
<dbReference type="SMR" id="Q7TS99"/>
<dbReference type="BioGRID" id="231505">
    <property type="interactions" value="3"/>
</dbReference>
<dbReference type="FunCoup" id="Q7TS99">
    <property type="interactions" value="276"/>
</dbReference>
<dbReference type="STRING" id="10090.ENSMUSP00000054823"/>
<dbReference type="GlyGen" id="Q7TS99">
    <property type="glycosylation" value="1 site"/>
</dbReference>
<dbReference type="iPTMnet" id="Q7TS99"/>
<dbReference type="PhosphoSitePlus" id="Q7TS99"/>
<dbReference type="PaxDb" id="10090-ENSMUSP00000054823"/>
<dbReference type="Antibodypedia" id="28910">
    <property type="antibodies" value="98 antibodies from 18 providers"/>
</dbReference>
<dbReference type="DNASU" id="234219"/>
<dbReference type="Ensembl" id="ENSMUST00000058636.9">
    <property type="protein sequence ID" value="ENSMUSP00000054823.8"/>
    <property type="gene ID" value="ENSMUSG00000047171.9"/>
</dbReference>
<dbReference type="GeneID" id="234219"/>
<dbReference type="KEGG" id="mmu:234219"/>
<dbReference type="UCSC" id="uc009lqb.1">
    <property type="organism name" value="mouse"/>
</dbReference>
<dbReference type="AGR" id="MGI:3040955"/>
<dbReference type="CTD" id="391723"/>
<dbReference type="MGI" id="MGI:3040955">
    <property type="gene designation" value="Helt"/>
</dbReference>
<dbReference type="VEuPathDB" id="HostDB:ENSMUSG00000047171"/>
<dbReference type="eggNOG" id="KOG4304">
    <property type="taxonomic scope" value="Eukaryota"/>
</dbReference>
<dbReference type="GeneTree" id="ENSGT00940000160388"/>
<dbReference type="HOGENOM" id="CLU_084227_0_0_1"/>
<dbReference type="InParanoid" id="Q7TS99"/>
<dbReference type="OMA" id="GHTHANA"/>
<dbReference type="OrthoDB" id="6371181at2759"/>
<dbReference type="PhylomeDB" id="Q7TS99"/>
<dbReference type="TreeFam" id="TF323617"/>
<dbReference type="BioGRID-ORCS" id="234219">
    <property type="hits" value="3 hits in 76 CRISPR screens"/>
</dbReference>
<dbReference type="PRO" id="PR:Q7TS99"/>
<dbReference type="Proteomes" id="UP000000589">
    <property type="component" value="Chromosome 8"/>
</dbReference>
<dbReference type="RNAct" id="Q7TS99">
    <property type="molecule type" value="protein"/>
</dbReference>
<dbReference type="Bgee" id="ENSMUSG00000047171">
    <property type="expression patterns" value="Expressed in forebrain-midbrain boundary and 35 other cell types or tissues"/>
</dbReference>
<dbReference type="ExpressionAtlas" id="Q7TS99">
    <property type="expression patterns" value="baseline and differential"/>
</dbReference>
<dbReference type="GO" id="GO:0005634">
    <property type="term" value="C:nucleus"/>
    <property type="evidence" value="ECO:0000314"/>
    <property type="project" value="MGI"/>
</dbReference>
<dbReference type="GO" id="GO:0005667">
    <property type="term" value="C:transcription regulator complex"/>
    <property type="evidence" value="ECO:0000314"/>
    <property type="project" value="MGI"/>
</dbReference>
<dbReference type="GO" id="GO:0003677">
    <property type="term" value="F:DNA binding"/>
    <property type="evidence" value="ECO:0000314"/>
    <property type="project" value="MGI"/>
</dbReference>
<dbReference type="GO" id="GO:0003700">
    <property type="term" value="F:DNA-binding transcription factor activity"/>
    <property type="evidence" value="ECO:0000314"/>
    <property type="project" value="MGI"/>
</dbReference>
<dbReference type="GO" id="GO:0001227">
    <property type="term" value="F:DNA-binding transcription repressor activity, RNA polymerase II-specific"/>
    <property type="evidence" value="ECO:0000314"/>
    <property type="project" value="NTNU_SB"/>
</dbReference>
<dbReference type="GO" id="GO:0042802">
    <property type="term" value="F:identical protein binding"/>
    <property type="evidence" value="ECO:0000353"/>
    <property type="project" value="MGI"/>
</dbReference>
<dbReference type="GO" id="GO:0046983">
    <property type="term" value="F:protein dimerization activity"/>
    <property type="evidence" value="ECO:0007669"/>
    <property type="project" value="InterPro"/>
</dbReference>
<dbReference type="GO" id="GO:0000978">
    <property type="term" value="F:RNA polymerase II cis-regulatory region sequence-specific DNA binding"/>
    <property type="evidence" value="ECO:0000314"/>
    <property type="project" value="NTNU_SB"/>
</dbReference>
<dbReference type="GO" id="GO:0007417">
    <property type="term" value="P:central nervous system development"/>
    <property type="evidence" value="ECO:0000315"/>
    <property type="project" value="MGI"/>
</dbReference>
<dbReference type="GO" id="GO:0097154">
    <property type="term" value="P:GABAergic neuron differentiation"/>
    <property type="evidence" value="ECO:0000316"/>
    <property type="project" value="MGI"/>
</dbReference>
<dbReference type="GO" id="GO:0021858">
    <property type="term" value="P:GABAergic neuron differentiation in basal ganglia"/>
    <property type="evidence" value="ECO:0000315"/>
    <property type="project" value="MGI"/>
</dbReference>
<dbReference type="GO" id="GO:0010467">
    <property type="term" value="P:gene expression"/>
    <property type="evidence" value="ECO:0000315"/>
    <property type="project" value="MGI"/>
</dbReference>
<dbReference type="GO" id="GO:0035264">
    <property type="term" value="P:multicellular organism growth"/>
    <property type="evidence" value="ECO:0000315"/>
    <property type="project" value="MGI"/>
</dbReference>
<dbReference type="GO" id="GO:0000122">
    <property type="term" value="P:negative regulation of transcription by RNA polymerase II"/>
    <property type="evidence" value="ECO:0000314"/>
    <property type="project" value="MGI"/>
</dbReference>
<dbReference type="GO" id="GO:0045944">
    <property type="term" value="P:positive regulation of transcription by RNA polymerase II"/>
    <property type="evidence" value="ECO:0000315"/>
    <property type="project" value="MGI"/>
</dbReference>
<dbReference type="GO" id="GO:0009791">
    <property type="term" value="P:post-embryonic development"/>
    <property type="evidence" value="ECO:0000315"/>
    <property type="project" value="MGI"/>
</dbReference>
<dbReference type="GO" id="GO:0001967">
    <property type="term" value="P:suckling behavior"/>
    <property type="evidence" value="ECO:0000315"/>
    <property type="project" value="MGI"/>
</dbReference>
<dbReference type="GO" id="GO:0006366">
    <property type="term" value="P:transcription by RNA polymerase II"/>
    <property type="evidence" value="ECO:0000315"/>
    <property type="project" value="MGI"/>
</dbReference>
<dbReference type="CDD" id="cd11408">
    <property type="entry name" value="bHLH-O_HELT"/>
    <property type="match status" value="1"/>
</dbReference>
<dbReference type="FunFam" id="4.10.280.10:FF:000054">
    <property type="entry name" value="hairy and enhancer of split-related protein HELT"/>
    <property type="match status" value="1"/>
</dbReference>
<dbReference type="Gene3D" id="6.10.250.980">
    <property type="match status" value="1"/>
</dbReference>
<dbReference type="Gene3D" id="4.10.280.10">
    <property type="entry name" value="Helix-loop-helix DNA-binding domain"/>
    <property type="match status" value="1"/>
</dbReference>
<dbReference type="InterPro" id="IPR011598">
    <property type="entry name" value="bHLH_dom"/>
</dbReference>
<dbReference type="InterPro" id="IPR050370">
    <property type="entry name" value="HES_HEY"/>
</dbReference>
<dbReference type="InterPro" id="IPR036638">
    <property type="entry name" value="HLH_DNA-bd_sf"/>
</dbReference>
<dbReference type="InterPro" id="IPR003650">
    <property type="entry name" value="Orange_dom"/>
</dbReference>
<dbReference type="PANTHER" id="PTHR10985">
    <property type="entry name" value="BASIC HELIX-LOOP-HELIX TRANSCRIPTION FACTOR, HES-RELATED"/>
    <property type="match status" value="1"/>
</dbReference>
<dbReference type="Pfam" id="PF07527">
    <property type="entry name" value="Hairy_orange"/>
    <property type="match status" value="1"/>
</dbReference>
<dbReference type="Pfam" id="PF00010">
    <property type="entry name" value="HLH"/>
    <property type="match status" value="1"/>
</dbReference>
<dbReference type="SMART" id="SM00353">
    <property type="entry name" value="HLH"/>
    <property type="match status" value="1"/>
</dbReference>
<dbReference type="SUPFAM" id="SSF47459">
    <property type="entry name" value="HLH, helix-loop-helix DNA-binding domain"/>
    <property type="match status" value="1"/>
</dbReference>
<dbReference type="SUPFAM" id="SSF158457">
    <property type="entry name" value="Orange domain-like"/>
    <property type="match status" value="1"/>
</dbReference>
<dbReference type="PROSITE" id="PS50888">
    <property type="entry name" value="BHLH"/>
    <property type="match status" value="1"/>
</dbReference>
<dbReference type="PROSITE" id="PS51054">
    <property type="entry name" value="ORANGE"/>
    <property type="match status" value="1"/>
</dbReference>
<feature type="chain" id="PRO_0000349379" description="Hairy and enhancer of split-related protein HELT">
    <location>
        <begin position="1"/>
        <end position="240"/>
    </location>
</feature>
<feature type="domain" description="bHLH" evidence="2">
    <location>
        <begin position="10"/>
        <end position="65"/>
    </location>
</feature>
<feature type="domain" description="Orange" evidence="1">
    <location>
        <begin position="86"/>
        <end position="121"/>
    </location>
</feature>
<feature type="modified residue" description="N6-acetyllysine" evidence="9">
    <location>
        <position position="48"/>
    </location>
</feature>
<gene>
    <name type="primary">Helt</name>
    <name type="synonym">Hesl</name>
    <name type="synonym">Mgn</name>
</gene>
<protein>
    <recommendedName>
        <fullName>Hairy and enhancer of split-related protein HELT</fullName>
    </recommendedName>
    <alternativeName>
        <fullName>HES/HEY-like transcription factor</fullName>
    </alternativeName>
    <alternativeName>
        <fullName>Protein Hes-like</fullName>
    </alternativeName>
    <alternativeName>
        <fullName>Protein megane</fullName>
    </alternativeName>
</protein>
<organism>
    <name type="scientific">Mus musculus</name>
    <name type="common">Mouse</name>
    <dbReference type="NCBI Taxonomy" id="10090"/>
    <lineage>
        <taxon>Eukaryota</taxon>
        <taxon>Metazoa</taxon>
        <taxon>Chordata</taxon>
        <taxon>Craniata</taxon>
        <taxon>Vertebrata</taxon>
        <taxon>Euteleostomi</taxon>
        <taxon>Mammalia</taxon>
        <taxon>Eutheria</taxon>
        <taxon>Euarchontoglires</taxon>
        <taxon>Glires</taxon>
        <taxon>Rodentia</taxon>
        <taxon>Myomorpha</taxon>
        <taxon>Muroidea</taxon>
        <taxon>Muridae</taxon>
        <taxon>Murinae</taxon>
        <taxon>Mus</taxon>
        <taxon>Mus</taxon>
    </lineage>
</organism>
<name>HELT_MOUSE</name>
<accession>Q7TS99</accession>
<comment type="function">
    <text evidence="3 4 6 7">Transcriptional repressor which binds preferentially to the canonical E box sequence 5'-CACGCG-3'. Required for the development of GABAergic neurons.</text>
</comment>
<comment type="subunit">
    <text evidence="3">Self-associates. Interacts with HES5 and HEY2.</text>
</comment>
<comment type="subcellular location">
    <subcellularLocation>
        <location evidence="1 2 3 5">Nucleus</location>
    </subcellularLocation>
</comment>
<comment type="tissue specificity">
    <text>Expressed in heart and testis.</text>
</comment>
<comment type="developmental stage">
    <text evidence="4 5 6 7">Expressed in the progenitor domains for mesencephalic GABAergic neurons.</text>
</comment>
<comment type="disruption phenotype">
    <text evidence="6">Death between 2 and 5 weeks of age. The mesencephalic GABAergic progenitors in these animals fail to develop into neurons.</text>
</comment>
<comment type="similarity">
    <text evidence="8">Belongs to the HEY family.</text>
</comment>